<name>RL34_MESFL</name>
<sequence length="44" mass="5099">MKRTWQPSKIKHARVHGFRARMATKNGRKVIKARRAKGRAKLTA</sequence>
<keyword id="KW-1185">Reference proteome</keyword>
<keyword id="KW-0687">Ribonucleoprotein</keyword>
<keyword id="KW-0689">Ribosomal protein</keyword>
<protein>
    <recommendedName>
        <fullName evidence="1">Large ribosomal subunit protein bL34</fullName>
    </recommendedName>
    <alternativeName>
        <fullName evidence="2">50S ribosomal protein L34</fullName>
    </alternativeName>
</protein>
<reference key="1">
    <citation type="submission" date="2004-06" db="EMBL/GenBank/DDBJ databases">
        <authorList>
            <person name="Birren B.W."/>
            <person name="Stange-Thomann N."/>
            <person name="Hafez N."/>
            <person name="DeCaprio D."/>
            <person name="Fisher S."/>
            <person name="Butler J."/>
            <person name="Elkins T."/>
            <person name="Kodira C.D."/>
            <person name="Major J."/>
            <person name="Wang S."/>
            <person name="Nicol R."/>
            <person name="Nusbaum C."/>
        </authorList>
    </citation>
    <scope>NUCLEOTIDE SEQUENCE [LARGE SCALE GENOMIC DNA]</scope>
    <source>
        <strain>ATCC 33453 / NBRC 100688 / NCTC 11704 / L1</strain>
    </source>
</reference>
<feature type="chain" id="PRO_0000187407" description="Large ribosomal subunit protein bL34">
    <location>
        <begin position="1"/>
        <end position="44"/>
    </location>
</feature>
<comment type="similarity">
    <text evidence="1">Belongs to the bacterial ribosomal protein bL34 family.</text>
</comment>
<proteinExistence type="inferred from homology"/>
<organism>
    <name type="scientific">Mesoplasma florum (strain ATCC 33453 / NBRC 100688 / NCTC 11704 / L1)</name>
    <name type="common">Acholeplasma florum</name>
    <dbReference type="NCBI Taxonomy" id="265311"/>
    <lineage>
        <taxon>Bacteria</taxon>
        <taxon>Bacillati</taxon>
        <taxon>Mycoplasmatota</taxon>
        <taxon>Mollicutes</taxon>
        <taxon>Entomoplasmatales</taxon>
        <taxon>Entomoplasmataceae</taxon>
        <taxon>Mesoplasma</taxon>
    </lineage>
</organism>
<dbReference type="EMBL" id="AE017263">
    <property type="protein sequence ID" value="AAT76039.1"/>
    <property type="molecule type" value="Genomic_DNA"/>
</dbReference>
<dbReference type="RefSeq" id="WP_011183579.1">
    <property type="nucleotide sequence ID" value="NC_006055.1"/>
</dbReference>
<dbReference type="RefSeq" id="YP_053923.1">
    <property type="nucleotide sequence ID" value="NC_006055.1"/>
</dbReference>
<dbReference type="SMR" id="Q6F0D4"/>
<dbReference type="STRING" id="265311.Mfl682.1"/>
<dbReference type="PaxDb" id="265311-Mfl682.1"/>
<dbReference type="EnsemblBacteria" id="AAT76039">
    <property type="protein sequence ID" value="AAT76039"/>
    <property type="gene ID" value="Mfl682.1"/>
</dbReference>
<dbReference type="GeneID" id="2897767"/>
<dbReference type="KEGG" id="mfl:Mfl682.1"/>
<dbReference type="PATRIC" id="fig|265311.5.peg.685"/>
<dbReference type="eggNOG" id="COG0230">
    <property type="taxonomic scope" value="Bacteria"/>
</dbReference>
<dbReference type="HOGENOM" id="CLU_129938_2_0_14"/>
<dbReference type="OrthoDB" id="9804164at2"/>
<dbReference type="Proteomes" id="UP000006647">
    <property type="component" value="Chromosome"/>
</dbReference>
<dbReference type="GO" id="GO:1990904">
    <property type="term" value="C:ribonucleoprotein complex"/>
    <property type="evidence" value="ECO:0007669"/>
    <property type="project" value="UniProtKB-KW"/>
</dbReference>
<dbReference type="GO" id="GO:0005840">
    <property type="term" value="C:ribosome"/>
    <property type="evidence" value="ECO:0007669"/>
    <property type="project" value="UniProtKB-KW"/>
</dbReference>
<dbReference type="GO" id="GO:0003735">
    <property type="term" value="F:structural constituent of ribosome"/>
    <property type="evidence" value="ECO:0007669"/>
    <property type="project" value="InterPro"/>
</dbReference>
<dbReference type="GO" id="GO:0006412">
    <property type="term" value="P:translation"/>
    <property type="evidence" value="ECO:0007669"/>
    <property type="project" value="UniProtKB-UniRule"/>
</dbReference>
<dbReference type="FunFam" id="1.10.287.3980:FF:000001">
    <property type="entry name" value="Mitochondrial ribosomal protein L34"/>
    <property type="match status" value="1"/>
</dbReference>
<dbReference type="Gene3D" id="1.10.287.3980">
    <property type="match status" value="1"/>
</dbReference>
<dbReference type="HAMAP" id="MF_00391">
    <property type="entry name" value="Ribosomal_bL34"/>
    <property type="match status" value="1"/>
</dbReference>
<dbReference type="InterPro" id="IPR000271">
    <property type="entry name" value="Ribosomal_bL34"/>
</dbReference>
<dbReference type="InterPro" id="IPR020939">
    <property type="entry name" value="Ribosomal_bL34_CS"/>
</dbReference>
<dbReference type="NCBIfam" id="TIGR01030">
    <property type="entry name" value="rpmH_bact"/>
    <property type="match status" value="1"/>
</dbReference>
<dbReference type="PANTHER" id="PTHR14503:SF4">
    <property type="entry name" value="LARGE RIBOSOMAL SUBUNIT PROTEIN BL34M"/>
    <property type="match status" value="1"/>
</dbReference>
<dbReference type="PANTHER" id="PTHR14503">
    <property type="entry name" value="MITOCHONDRIAL RIBOSOMAL PROTEIN 34 FAMILY MEMBER"/>
    <property type="match status" value="1"/>
</dbReference>
<dbReference type="Pfam" id="PF00468">
    <property type="entry name" value="Ribosomal_L34"/>
    <property type="match status" value="1"/>
</dbReference>
<dbReference type="PROSITE" id="PS00784">
    <property type="entry name" value="RIBOSOMAL_L34"/>
    <property type="match status" value="1"/>
</dbReference>
<gene>
    <name evidence="1" type="primary">rpmH</name>
    <name type="ordered locus">Mfl682.1</name>
</gene>
<accession>Q6F0D4</accession>
<evidence type="ECO:0000255" key="1">
    <source>
        <dbReference type="HAMAP-Rule" id="MF_00391"/>
    </source>
</evidence>
<evidence type="ECO:0000305" key="2"/>